<accession>B7LN74</accession>
<dbReference type="EMBL" id="CU928158">
    <property type="protein sequence ID" value="CAQ88585.1"/>
    <property type="molecule type" value="Genomic_DNA"/>
</dbReference>
<dbReference type="RefSeq" id="WP_000167338.1">
    <property type="nucleotide sequence ID" value="NC_011740.1"/>
</dbReference>
<dbReference type="SMR" id="B7LN74"/>
<dbReference type="GeneID" id="75057893"/>
<dbReference type="KEGG" id="efe:EFER_1056"/>
<dbReference type="HOGENOM" id="CLU_105066_2_0_6"/>
<dbReference type="OrthoDB" id="9804203at2"/>
<dbReference type="Proteomes" id="UP000000745">
    <property type="component" value="Chromosome"/>
</dbReference>
<dbReference type="GO" id="GO:0005694">
    <property type="term" value="C:chromosome"/>
    <property type="evidence" value="ECO:0007669"/>
    <property type="project" value="InterPro"/>
</dbReference>
<dbReference type="GO" id="GO:0005829">
    <property type="term" value="C:cytosol"/>
    <property type="evidence" value="ECO:0007669"/>
    <property type="project" value="TreeGrafter"/>
</dbReference>
<dbReference type="GO" id="GO:0003677">
    <property type="term" value="F:DNA binding"/>
    <property type="evidence" value="ECO:0007669"/>
    <property type="project" value="UniProtKB-UniRule"/>
</dbReference>
<dbReference type="GO" id="GO:0030527">
    <property type="term" value="F:structural constituent of chromatin"/>
    <property type="evidence" value="ECO:0007669"/>
    <property type="project" value="InterPro"/>
</dbReference>
<dbReference type="GO" id="GO:0006310">
    <property type="term" value="P:DNA recombination"/>
    <property type="evidence" value="ECO:0007669"/>
    <property type="project" value="UniProtKB-UniRule"/>
</dbReference>
<dbReference type="GO" id="GO:0006355">
    <property type="term" value="P:regulation of DNA-templated transcription"/>
    <property type="evidence" value="ECO:0007669"/>
    <property type="project" value="UniProtKB-UniRule"/>
</dbReference>
<dbReference type="GO" id="GO:0006417">
    <property type="term" value="P:regulation of translation"/>
    <property type="evidence" value="ECO:0007669"/>
    <property type="project" value="UniProtKB-UniRule"/>
</dbReference>
<dbReference type="CDD" id="cd13836">
    <property type="entry name" value="IHF_B"/>
    <property type="match status" value="1"/>
</dbReference>
<dbReference type="FunFam" id="4.10.520.10:FF:000003">
    <property type="entry name" value="Integration host factor subunit beta"/>
    <property type="match status" value="1"/>
</dbReference>
<dbReference type="Gene3D" id="4.10.520.10">
    <property type="entry name" value="IHF-like DNA-binding proteins"/>
    <property type="match status" value="1"/>
</dbReference>
<dbReference type="HAMAP" id="MF_00381">
    <property type="entry name" value="IHF_beta"/>
    <property type="match status" value="1"/>
</dbReference>
<dbReference type="InterPro" id="IPR000119">
    <property type="entry name" value="Hist_DNA-bd"/>
</dbReference>
<dbReference type="InterPro" id="IPR020816">
    <property type="entry name" value="Histone-like_DNA-bd_CS"/>
</dbReference>
<dbReference type="InterPro" id="IPR010992">
    <property type="entry name" value="IHF-like_DNA-bd_dom_sf"/>
</dbReference>
<dbReference type="InterPro" id="IPR005685">
    <property type="entry name" value="IHF_beta"/>
</dbReference>
<dbReference type="NCBIfam" id="TIGR00988">
    <property type="entry name" value="hip"/>
    <property type="match status" value="1"/>
</dbReference>
<dbReference type="NCBIfam" id="NF001222">
    <property type="entry name" value="PRK00199.1"/>
    <property type="match status" value="1"/>
</dbReference>
<dbReference type="PANTHER" id="PTHR33175">
    <property type="entry name" value="DNA-BINDING PROTEIN HU"/>
    <property type="match status" value="1"/>
</dbReference>
<dbReference type="PANTHER" id="PTHR33175:SF5">
    <property type="entry name" value="INTEGRATION HOST FACTOR SUBUNIT BETA"/>
    <property type="match status" value="1"/>
</dbReference>
<dbReference type="Pfam" id="PF00216">
    <property type="entry name" value="Bac_DNA_binding"/>
    <property type="match status" value="1"/>
</dbReference>
<dbReference type="PRINTS" id="PR01727">
    <property type="entry name" value="DNABINDINGHU"/>
</dbReference>
<dbReference type="SMART" id="SM00411">
    <property type="entry name" value="BHL"/>
    <property type="match status" value="1"/>
</dbReference>
<dbReference type="SUPFAM" id="SSF47729">
    <property type="entry name" value="IHF-like DNA-binding proteins"/>
    <property type="match status" value="1"/>
</dbReference>
<dbReference type="PROSITE" id="PS00045">
    <property type="entry name" value="HISTONE_LIKE"/>
    <property type="match status" value="1"/>
</dbReference>
<protein>
    <recommendedName>
        <fullName evidence="1">Integration host factor subunit beta</fullName>
        <shortName evidence="1">IHF-beta</shortName>
    </recommendedName>
</protein>
<name>IHFB_ESCF3</name>
<reference key="1">
    <citation type="journal article" date="2009" name="PLoS Genet.">
        <title>Organised genome dynamics in the Escherichia coli species results in highly diverse adaptive paths.</title>
        <authorList>
            <person name="Touchon M."/>
            <person name="Hoede C."/>
            <person name="Tenaillon O."/>
            <person name="Barbe V."/>
            <person name="Baeriswyl S."/>
            <person name="Bidet P."/>
            <person name="Bingen E."/>
            <person name="Bonacorsi S."/>
            <person name="Bouchier C."/>
            <person name="Bouvet O."/>
            <person name="Calteau A."/>
            <person name="Chiapello H."/>
            <person name="Clermont O."/>
            <person name="Cruveiller S."/>
            <person name="Danchin A."/>
            <person name="Diard M."/>
            <person name="Dossat C."/>
            <person name="Karoui M.E."/>
            <person name="Frapy E."/>
            <person name="Garry L."/>
            <person name="Ghigo J.M."/>
            <person name="Gilles A.M."/>
            <person name="Johnson J."/>
            <person name="Le Bouguenec C."/>
            <person name="Lescat M."/>
            <person name="Mangenot S."/>
            <person name="Martinez-Jehanne V."/>
            <person name="Matic I."/>
            <person name="Nassif X."/>
            <person name="Oztas S."/>
            <person name="Petit M.A."/>
            <person name="Pichon C."/>
            <person name="Rouy Z."/>
            <person name="Ruf C.S."/>
            <person name="Schneider D."/>
            <person name="Tourret J."/>
            <person name="Vacherie B."/>
            <person name="Vallenet D."/>
            <person name="Medigue C."/>
            <person name="Rocha E.P.C."/>
            <person name="Denamur E."/>
        </authorList>
    </citation>
    <scope>NUCLEOTIDE SEQUENCE [LARGE SCALE GENOMIC DNA]</scope>
    <source>
        <strain>ATCC 35469 / DSM 13698 / BCRC 15582 / CCUG 18766 / IAM 14443 / JCM 21226 / LMG 7866 / NBRC 102419 / NCTC 12128 / CDC 0568-73</strain>
    </source>
</reference>
<sequence length="94" mass="10649">MTKSELIERLATQQSHIPAKVVEDAVKEMLEHMASTLAQGERIEIRGFGSFSLHYRAPRTGRNPKTGDKVELEGKYVPHFKPGKELRDRANIYG</sequence>
<organism>
    <name type="scientific">Escherichia fergusonii (strain ATCC 35469 / DSM 13698 / CCUG 18766 / IAM 14443 / JCM 21226 / LMG 7866 / NBRC 102419 / NCTC 12128 / CDC 0568-73)</name>
    <dbReference type="NCBI Taxonomy" id="585054"/>
    <lineage>
        <taxon>Bacteria</taxon>
        <taxon>Pseudomonadati</taxon>
        <taxon>Pseudomonadota</taxon>
        <taxon>Gammaproteobacteria</taxon>
        <taxon>Enterobacterales</taxon>
        <taxon>Enterobacteriaceae</taxon>
        <taxon>Escherichia</taxon>
    </lineage>
</organism>
<evidence type="ECO:0000255" key="1">
    <source>
        <dbReference type="HAMAP-Rule" id="MF_00381"/>
    </source>
</evidence>
<proteinExistence type="inferred from homology"/>
<keyword id="KW-0233">DNA recombination</keyword>
<keyword id="KW-0238">DNA-binding</keyword>
<keyword id="KW-0804">Transcription</keyword>
<keyword id="KW-0805">Transcription regulation</keyword>
<keyword id="KW-0810">Translation regulation</keyword>
<feature type="chain" id="PRO_1000122218" description="Integration host factor subunit beta">
    <location>
        <begin position="1"/>
        <end position="94"/>
    </location>
</feature>
<comment type="function">
    <text evidence="1">This protein is one of the two subunits of integration host factor, a specific DNA-binding protein that functions in genetic recombination as well as in transcriptional and translational control.</text>
</comment>
<comment type="subunit">
    <text evidence="1">Heterodimer of an alpha and a beta chain.</text>
</comment>
<comment type="similarity">
    <text evidence="1">Belongs to the bacterial histone-like protein family.</text>
</comment>
<gene>
    <name evidence="1" type="primary">ihfB</name>
    <name evidence="1" type="synonym">himD</name>
    <name type="ordered locus">EFER_1056</name>
</gene>